<accession>P0A3B2</accession>
<accession>B7UNJ3</accession>
<accession>P32132</accession>
<accession>Q2M8G8</accession>
<accession>Q6BEY2</accession>
<accession>Q9EXN7</accession>
<dbReference type="EC" id="3.6.5.-" evidence="1 3"/>
<dbReference type="EMBL" id="AJ224871">
    <property type="protein sequence ID" value="CAA12172.1"/>
    <property type="molecule type" value="Genomic_DNA"/>
</dbReference>
<dbReference type="EMBL" id="AJ278218">
    <property type="protein sequence ID" value="CAC20136.1"/>
    <property type="molecule type" value="Genomic_DNA"/>
</dbReference>
<dbReference type="EMBL" id="FM180568">
    <property type="protein sequence ID" value="CAS11725.1"/>
    <property type="molecule type" value="Genomic_DNA"/>
</dbReference>
<dbReference type="EMBL" id="AF058333">
    <property type="protein sequence ID" value="AAC13722.1"/>
    <property type="molecule type" value="Genomic_DNA"/>
</dbReference>
<dbReference type="RefSeq" id="WP_000570668.1">
    <property type="nucleotide sequence ID" value="NC_011601.1"/>
</dbReference>
<dbReference type="SMR" id="P0A3B2"/>
<dbReference type="IntAct" id="P0A3B2">
    <property type="interactions" value="50"/>
</dbReference>
<dbReference type="GeneID" id="93778065"/>
<dbReference type="KEGG" id="ecg:E2348C_4177"/>
<dbReference type="HOGENOM" id="CLU_017016_4_0_6"/>
<dbReference type="EvolutionaryTrace" id="P0A3B2"/>
<dbReference type="Proteomes" id="UP000008205">
    <property type="component" value="Chromosome"/>
</dbReference>
<dbReference type="GO" id="GO:0005829">
    <property type="term" value="C:cytosol"/>
    <property type="evidence" value="ECO:0007669"/>
    <property type="project" value="TreeGrafter"/>
</dbReference>
<dbReference type="GO" id="GO:1990904">
    <property type="term" value="C:ribonucleoprotein complex"/>
    <property type="evidence" value="ECO:0007669"/>
    <property type="project" value="TreeGrafter"/>
</dbReference>
<dbReference type="GO" id="GO:0005525">
    <property type="term" value="F:GTP binding"/>
    <property type="evidence" value="ECO:0007669"/>
    <property type="project" value="UniProtKB-UniRule"/>
</dbReference>
<dbReference type="GO" id="GO:0003924">
    <property type="term" value="F:GTPase activity"/>
    <property type="evidence" value="ECO:0007669"/>
    <property type="project" value="UniProtKB-UniRule"/>
</dbReference>
<dbReference type="GO" id="GO:0097216">
    <property type="term" value="F:guanosine tetraphosphate binding"/>
    <property type="evidence" value="ECO:0007669"/>
    <property type="project" value="UniProtKB-ARBA"/>
</dbReference>
<dbReference type="GO" id="GO:0043022">
    <property type="term" value="F:ribosome binding"/>
    <property type="evidence" value="ECO:0007669"/>
    <property type="project" value="UniProtKB-UniRule"/>
</dbReference>
<dbReference type="GO" id="GO:0019843">
    <property type="term" value="F:rRNA binding"/>
    <property type="evidence" value="ECO:0007669"/>
    <property type="project" value="UniProtKB-KW"/>
</dbReference>
<dbReference type="GO" id="GO:0000049">
    <property type="term" value="F:tRNA binding"/>
    <property type="evidence" value="ECO:0007669"/>
    <property type="project" value="UniProtKB-KW"/>
</dbReference>
<dbReference type="GO" id="GO:0000027">
    <property type="term" value="P:ribosomal large subunit assembly"/>
    <property type="evidence" value="ECO:0007669"/>
    <property type="project" value="UniProtKB-UniRule"/>
</dbReference>
<dbReference type="CDD" id="cd16263">
    <property type="entry name" value="BipA_III"/>
    <property type="match status" value="1"/>
</dbReference>
<dbReference type="CDD" id="cd03710">
    <property type="entry name" value="BipA_TypA_C"/>
    <property type="match status" value="1"/>
</dbReference>
<dbReference type="CDD" id="cd03691">
    <property type="entry name" value="BipA_TypA_II"/>
    <property type="match status" value="1"/>
</dbReference>
<dbReference type="CDD" id="cd01891">
    <property type="entry name" value="TypA_BipA"/>
    <property type="match status" value="1"/>
</dbReference>
<dbReference type="FunFam" id="2.40.30.10:FF:000016">
    <property type="entry name" value="GTP-binding protein TypA"/>
    <property type="match status" value="1"/>
</dbReference>
<dbReference type="FunFam" id="2.40.50.250:FF:000001">
    <property type="entry name" value="GTP-binding protein TypA"/>
    <property type="match status" value="1"/>
</dbReference>
<dbReference type="FunFam" id="3.30.70.240:FF:000002">
    <property type="entry name" value="GTP-binding protein TypA"/>
    <property type="match status" value="1"/>
</dbReference>
<dbReference type="FunFam" id="3.30.70.870:FF:000003">
    <property type="entry name" value="GTP-binding protein TypA"/>
    <property type="match status" value="1"/>
</dbReference>
<dbReference type="FunFam" id="3.40.50.300:FF:000055">
    <property type="entry name" value="GTP-binding protein TypA"/>
    <property type="match status" value="1"/>
</dbReference>
<dbReference type="Gene3D" id="3.30.70.240">
    <property type="match status" value="1"/>
</dbReference>
<dbReference type="Gene3D" id="2.40.50.250">
    <property type="entry name" value="bipa protein"/>
    <property type="match status" value="1"/>
</dbReference>
<dbReference type="Gene3D" id="3.30.70.870">
    <property type="entry name" value="Elongation Factor G (Translational Gtpase), domain 3"/>
    <property type="match status" value="1"/>
</dbReference>
<dbReference type="Gene3D" id="3.40.50.300">
    <property type="entry name" value="P-loop containing nucleotide triphosphate hydrolases"/>
    <property type="match status" value="1"/>
</dbReference>
<dbReference type="Gene3D" id="2.40.30.10">
    <property type="entry name" value="Translation factors"/>
    <property type="match status" value="1"/>
</dbReference>
<dbReference type="HAMAP" id="MF_00849">
    <property type="entry name" value="BipA"/>
    <property type="match status" value="1"/>
</dbReference>
<dbReference type="InterPro" id="IPR006298">
    <property type="entry name" value="BipA"/>
</dbReference>
<dbReference type="InterPro" id="IPR048876">
    <property type="entry name" value="BipA_C"/>
</dbReference>
<dbReference type="InterPro" id="IPR047041">
    <property type="entry name" value="BipA_GTP-bd_dom"/>
</dbReference>
<dbReference type="InterPro" id="IPR047042">
    <property type="entry name" value="BipA_II"/>
</dbReference>
<dbReference type="InterPro" id="IPR047043">
    <property type="entry name" value="BipA_III"/>
</dbReference>
<dbReference type="InterPro" id="IPR035651">
    <property type="entry name" value="BipA_V"/>
</dbReference>
<dbReference type="InterPro" id="IPR035647">
    <property type="entry name" value="EFG_III/V"/>
</dbReference>
<dbReference type="InterPro" id="IPR000640">
    <property type="entry name" value="EFG_V-like"/>
</dbReference>
<dbReference type="InterPro" id="IPR004161">
    <property type="entry name" value="EFTu-like_2"/>
</dbReference>
<dbReference type="InterPro" id="IPR031157">
    <property type="entry name" value="G_TR_CS"/>
</dbReference>
<dbReference type="InterPro" id="IPR027417">
    <property type="entry name" value="P-loop_NTPase"/>
</dbReference>
<dbReference type="InterPro" id="IPR005225">
    <property type="entry name" value="Small_GTP-bd"/>
</dbReference>
<dbReference type="InterPro" id="IPR000795">
    <property type="entry name" value="T_Tr_GTP-bd_dom"/>
</dbReference>
<dbReference type="InterPro" id="IPR009000">
    <property type="entry name" value="Transl_B-barrel_sf"/>
</dbReference>
<dbReference type="InterPro" id="IPR042116">
    <property type="entry name" value="TypA/BipA_C"/>
</dbReference>
<dbReference type="NCBIfam" id="NF007583">
    <property type="entry name" value="PRK10218.1"/>
    <property type="match status" value="1"/>
</dbReference>
<dbReference type="NCBIfam" id="TIGR00231">
    <property type="entry name" value="small_GTP"/>
    <property type="match status" value="1"/>
</dbReference>
<dbReference type="NCBIfam" id="TIGR01394">
    <property type="entry name" value="TypA_BipA"/>
    <property type="match status" value="1"/>
</dbReference>
<dbReference type="PANTHER" id="PTHR42908:SF8">
    <property type="entry name" value="TR-TYPE G DOMAIN-CONTAINING PROTEIN"/>
    <property type="match status" value="1"/>
</dbReference>
<dbReference type="PANTHER" id="PTHR42908">
    <property type="entry name" value="TRANSLATION ELONGATION FACTOR-RELATED"/>
    <property type="match status" value="1"/>
</dbReference>
<dbReference type="Pfam" id="PF21018">
    <property type="entry name" value="BipA_C"/>
    <property type="match status" value="1"/>
</dbReference>
<dbReference type="Pfam" id="PF00679">
    <property type="entry name" value="EFG_C"/>
    <property type="match status" value="1"/>
</dbReference>
<dbReference type="Pfam" id="PF00009">
    <property type="entry name" value="GTP_EFTU"/>
    <property type="match status" value="1"/>
</dbReference>
<dbReference type="Pfam" id="PF03144">
    <property type="entry name" value="GTP_EFTU_D2"/>
    <property type="match status" value="1"/>
</dbReference>
<dbReference type="PRINTS" id="PR00315">
    <property type="entry name" value="ELONGATNFCT"/>
</dbReference>
<dbReference type="SUPFAM" id="SSF54980">
    <property type="entry name" value="EF-G C-terminal domain-like"/>
    <property type="match status" value="2"/>
</dbReference>
<dbReference type="SUPFAM" id="SSF52540">
    <property type="entry name" value="P-loop containing nucleoside triphosphate hydrolases"/>
    <property type="match status" value="1"/>
</dbReference>
<dbReference type="SUPFAM" id="SSF50447">
    <property type="entry name" value="Translation proteins"/>
    <property type="match status" value="1"/>
</dbReference>
<dbReference type="PROSITE" id="PS00301">
    <property type="entry name" value="G_TR_1"/>
    <property type="match status" value="1"/>
</dbReference>
<dbReference type="PROSITE" id="PS51722">
    <property type="entry name" value="G_TR_2"/>
    <property type="match status" value="1"/>
</dbReference>
<reference key="1">
    <citation type="journal article" date="1998" name="Mol. Microbiol.">
        <title>BipA: a tyrosine-phosphorylated GTPase that mediates interactions between enteropathogenic Escherichia coli (EPEC) and epithelial cells.</title>
        <authorList>
            <person name="Farris M."/>
            <person name="Grant A."/>
            <person name="Richardson T.B."/>
            <person name="O'Connor C.D."/>
        </authorList>
    </citation>
    <scope>NUCLEOTIDE SEQUENCE [GENOMIC DNA]</scope>
    <scope>GTPASE ACTIVITY</scope>
    <scope>CATALYTIC ACTIVITY</scope>
    <scope>PHOSPHORYLATION</scope>
    <scope>DISRUPTION PHENOTYPE</scope>
    <source>
        <strain>E2348/69 / EPEC / MAR001</strain>
    </source>
</reference>
<reference key="2">
    <citation type="journal article" date="1998" name="J. Mol. Biol.">
        <title>Tyrosine phosphorylation in Escherichia coli.</title>
        <authorList>
            <person name="Freestone P."/>
            <person name="Trinei M."/>
            <person name="Clarke S.C."/>
            <person name="Nystroem T."/>
            <person name="Norris V."/>
        </authorList>
    </citation>
    <scope>NUCLEOTIDE SEQUENCE [GENOMIC DNA]</scope>
    <scope>PROTEIN SEQUENCE OF 1-7</scope>
    <scope>PHOSPHORYLATION</scope>
    <scope>DISRUPTION PHENOTYPE</scope>
    <source>
        <strain>E2348/69 / EPEC / MAR001</strain>
    </source>
</reference>
<reference key="3">
    <citation type="journal article" date="2009" name="J. Bacteriol.">
        <title>Complete genome sequence and comparative genome analysis of enteropathogenic Escherichia coli O127:H6 strain E2348/69.</title>
        <authorList>
            <person name="Iguchi A."/>
            <person name="Thomson N.R."/>
            <person name="Ogura Y."/>
            <person name="Saunders D."/>
            <person name="Ooka T."/>
            <person name="Henderson I.R."/>
            <person name="Harris D."/>
            <person name="Asadulghani M."/>
            <person name="Kurokawa K."/>
            <person name="Dean P."/>
            <person name="Kenny B."/>
            <person name="Quail M.A."/>
            <person name="Thurston S."/>
            <person name="Dougan G."/>
            <person name="Hayashi T."/>
            <person name="Parkhill J."/>
            <person name="Frankel G."/>
        </authorList>
    </citation>
    <scope>NUCLEOTIDE SEQUENCE [LARGE SCALE GENOMIC DNA]</scope>
    <source>
        <strain>E2348/69 / EPEC</strain>
    </source>
</reference>
<reference key="4">
    <citation type="journal article" date="1995" name="Mol. Microbiol.">
        <title>Identification of phosphoproteins in Escherichia coli.</title>
        <authorList>
            <person name="Freestone P."/>
            <person name="Grant S."/>
            <person name="Toth I."/>
            <person name="Norris V."/>
        </authorList>
    </citation>
    <scope>PROTEIN SEQUENCE OF 1-14</scope>
    <scope>SUBUNIT</scope>
    <scope>PHOSPHORYLATION</scope>
    <source>
        <strain>E2348/69 / EPEC / MAR001</strain>
    </source>
</reference>
<reference key="5">
    <citation type="journal article" date="1998" name="Biochem. Soc. Trans.">
        <title>BipA affects Ca++ fluxes and phosphorylation of the translocated intimin receptor (Tir/Hp90) in host epithelial cells infected with enteropathogenic E. coli.</title>
        <authorList>
            <person name="Farris M."/>
            <person name="Grant A."/>
            <person name="Jane S."/>
            <person name="Chad J."/>
            <person name="O'Connor C.D."/>
        </authorList>
    </citation>
    <scope>DISRUPTION PHENOTYPE</scope>
    <source>
        <strain>E2348/69 / EPEC / MAR001</strain>
    </source>
</reference>
<gene>
    <name evidence="1 6" type="primary">bipA</name>
    <name evidence="7" type="synonym">o591</name>
    <name evidence="7" type="synonym">typA</name>
    <name type="ordered locus">E2348C_4177</name>
</gene>
<proteinExistence type="evidence at protein level"/>
<feature type="chain" id="PRO_0000091551" description="Large ribosomal subunit assembly factor BipA">
    <location>
        <begin position="1"/>
        <end position="607"/>
    </location>
</feature>
<feature type="domain" description="tr-type G" evidence="1">
    <location>
        <begin position="3"/>
        <end position="198"/>
    </location>
</feature>
<feature type="binding site" evidence="1">
    <location>
        <begin position="15"/>
        <end position="20"/>
    </location>
    <ligand>
        <name>GTP</name>
        <dbReference type="ChEBI" id="CHEBI:37565"/>
    </ligand>
</feature>
<feature type="binding site" evidence="1">
    <location>
        <begin position="128"/>
        <end position="131"/>
    </location>
    <ligand>
        <name>GTP</name>
        <dbReference type="ChEBI" id="CHEBI:37565"/>
    </ligand>
</feature>
<feature type="sequence variant" description="In strain: MAR001.">
    <original>I</original>
    <variation>T</variation>
    <location>
        <position position="489"/>
    </location>
</feature>
<feature type="sequence variant" description="In strain: MAR001.">
    <original>V</original>
    <variation>A</variation>
    <location>
        <position position="497"/>
    </location>
</feature>
<feature type="sequence conflict" description="In Ref. 2; AAC13722." evidence="8" ref="2">
    <original>L</original>
    <variation>F</variation>
    <location>
        <position position="151"/>
    </location>
</feature>
<feature type="sequence conflict" description="In Ref. 2; AAC13722." evidence="8" ref="2">
    <original>E</original>
    <variation>Q</variation>
    <location>
        <position position="409"/>
    </location>
</feature>
<feature type="sequence conflict" description="In Ref. 2; AAC13722." evidence="8" ref="2">
    <original>D</original>
    <variation>H</variation>
    <location>
        <position position="573"/>
    </location>
</feature>
<feature type="sequence conflict" description="In Ref. 2; AAC13722." evidence="8" ref="2">
    <original>E</original>
    <variation>K</variation>
    <location>
        <position position="576"/>
    </location>
</feature>
<feature type="sequence conflict" description="In Ref. 2; AAC13722." evidence="8" ref="2">
    <original>T</original>
    <variation>I</variation>
    <location>
        <position position="583"/>
    </location>
</feature>
<feature type="sequence conflict" description="In Ref. 2; AAC13722." evidence="8" ref="2">
    <location>
        <begin position="589"/>
        <end position="607"/>
    </location>
</feature>
<comment type="function">
    <text evidence="1 3">A 50S ribosomal subunit assembly protein with GTPase activity, required for 50S subunit assembly at low temperatures, may also play a role in translation. Binds GTP and analogs. Binds the 70S ribosome between the 30S and 50S subunits, in a similar position as ribosome-bound EF-G; it contacts a number of ribosomal proteins, both rRNAs and the A-site tRNA (By similarity). GTPase that impacts interactions between enteropathogenic E.coli (EPEC) and epithelial cells and also has an effect on motility (PubMed:9622352).</text>
</comment>
<comment type="catalytic activity">
    <reaction evidence="1 3">
        <text>GTP + H2O = GDP + phosphate + H(+)</text>
        <dbReference type="Rhea" id="RHEA:19669"/>
        <dbReference type="ChEBI" id="CHEBI:15377"/>
        <dbReference type="ChEBI" id="CHEBI:15378"/>
        <dbReference type="ChEBI" id="CHEBI:37565"/>
        <dbReference type="ChEBI" id="CHEBI:43474"/>
        <dbReference type="ChEBI" id="CHEBI:58189"/>
    </reaction>
</comment>
<comment type="subunit">
    <text evidence="2">Purifies as a 125-130 kDa band, also copurifies with RNA polymerase.</text>
</comment>
<comment type="subcellular location">
    <subcellularLocation>
        <location evidence="1">Cytoplasm</location>
    </subcellularLocation>
    <text evidence="1">Binds to ribosomes.</text>
</comment>
<comment type="PTM">
    <text evidence="3 4 9">Phosphorylated on tyrosine, probably by autophosphorylation (Probable) (PubMed:9622352, PubMed:9642082). Phosphorylation is strongly activated by proteins present in strain E2348/69 / EPEC / MAR001 but not K12 / DH5 alpha. Phosphorylation increases GTPase activity (PubMed:9622352).</text>
</comment>
<comment type="disruption phenotype">
    <text evidence="3 4 5">Deletion alters the pattern of protein synthesis during both exponential growth and carbon starvation (PubMed:9642082). No longer alters host cytoskeleton; upon infection of HeLa cells microvilli are not disrupted (although some thicken), bacteria adhere to host cells but actin does not accumulate beneath them. 100-fold increased sensitivity of bacteria to human BPI. Increased bacterial cell motililty, increased secretion of flagellin gene (fliC) (PubMed:9622352). Decreased accumulation in infected HeLa cells of a phosphotyrosine protein that might be bacterial Tir, enhanced Ca(2+) efflux from infected HeLa cells (PubMed:9765944).</text>
</comment>
<comment type="miscellaneous">
    <text evidence="6">The initial events following infection of human cells by EPEC bacteria include the destruction of microvilli and the accumulation of actin underneath the adherent bacteria (part of the attaching and effacing lesion).</text>
</comment>
<comment type="similarity">
    <text evidence="1">Belongs to the TRAFAC class translation factor GTPase superfamily. Classic translation factor GTPase family. BipA subfamily.</text>
</comment>
<evidence type="ECO:0000255" key="1">
    <source>
        <dbReference type="HAMAP-Rule" id="MF_00849"/>
    </source>
</evidence>
<evidence type="ECO:0000269" key="2">
    <source>
    </source>
</evidence>
<evidence type="ECO:0000269" key="3">
    <source>
    </source>
</evidence>
<evidence type="ECO:0000269" key="4">
    <source>
    </source>
</evidence>
<evidence type="ECO:0000269" key="5">
    <source>
    </source>
</evidence>
<evidence type="ECO:0000303" key="6">
    <source>
    </source>
</evidence>
<evidence type="ECO:0000303" key="7">
    <source>
    </source>
</evidence>
<evidence type="ECO:0000305" key="8"/>
<evidence type="ECO:0000305" key="9">
    <source>
    </source>
</evidence>
<sequence length="607" mass="67355">MIEKLRNIAIIAHVDHGKTTLVDKLLQQSGTFDSRAETQERVMDSNDLEKERGITILAKNTAIKWNDYRINIVDTPGHADFGGEVERVMSMVDSVLLVVDAFDGPMPQTRFVTKKAFAYGLKPIVVINKVDRPGARPDWVVDQVFDLFVNLDATDEQLDFPIVYASALNGIAGLDHEDMAEDMTPLYQAIVDHVPAPDVDLDGPFQMQISQLDYNSYVGVIGIGRIKRGKVKPNQQVTIIDSEGKTRNAKVGKVLGHLGLERIETDLAEAGDIVAITGLGELNISDTVCDTQNVEALPALSVDEPTVSMFFCVNTSPFCGKEGKFVTSRQILDRLNKELVHNVALRVEETEDADAFRVSGRGELHLSVLIENMRREGFELAVSRPKVIFREIDGRKQEPYENVTLDVEEQHQGSVMQALGERKGDLKNMNPDGKGRVRLDYVIPSRGLIGFRSEFMTMTSGTGLLYSTFSHYDDVRPGEVGQRQNGVLISNGQGKAVAFALFGLQDRGKLFLGHGAEVYEGQIIGIHSRSNDLTVNCLTGKKLTNMRASGTDEAVVLVPPIRMTLEQALEFIDDDELVEVTPTSIRIRKRHLTENDRRRANRAPKDD</sequence>
<organism>
    <name type="scientific">Escherichia coli O127:H6 (strain E2348/69 / EPEC)</name>
    <dbReference type="NCBI Taxonomy" id="574521"/>
    <lineage>
        <taxon>Bacteria</taxon>
        <taxon>Pseudomonadati</taxon>
        <taxon>Pseudomonadota</taxon>
        <taxon>Gammaproteobacteria</taxon>
        <taxon>Enterobacterales</taxon>
        <taxon>Enterobacteriaceae</taxon>
        <taxon>Escherichia</taxon>
    </lineage>
</organism>
<keyword id="KW-0963">Cytoplasm</keyword>
<keyword id="KW-0903">Direct protein sequencing</keyword>
<keyword id="KW-0342">GTP-binding</keyword>
<keyword id="KW-0378">Hydrolase</keyword>
<keyword id="KW-0547">Nucleotide-binding</keyword>
<keyword id="KW-0597">Phosphoprotein</keyword>
<keyword id="KW-1185">Reference proteome</keyword>
<keyword id="KW-0690">Ribosome biogenesis</keyword>
<keyword id="KW-0694">RNA-binding</keyword>
<keyword id="KW-0699">rRNA-binding</keyword>
<keyword id="KW-0820">tRNA-binding</keyword>
<keyword id="KW-0843">Virulence</keyword>
<name>BIPA_ECO27</name>
<protein>
    <recommendedName>
        <fullName evidence="1">Large ribosomal subunit assembly factor BipA</fullName>
        <ecNumber evidence="1 3">3.6.5.-</ecNumber>
    </recommendedName>
    <alternativeName>
        <fullName evidence="8">50S ribosomal subunit assembly factor BipA</fullName>
    </alternativeName>
    <alternativeName>
        <fullName evidence="1">GTP-binding protein BipA</fullName>
    </alternativeName>
    <alternativeName>
        <fullName>GTP-binding protein BipA/TypA</fullName>
    </alternativeName>
    <alternativeName>
        <fullName>Ribosome-dependent GTPase BipA</fullName>
    </alternativeName>
    <alternativeName>
        <fullName evidence="7">Tyrosine phosphorylated protein A</fullName>
    </alternativeName>
</protein>